<accession>A6QEE6</accession>
<feature type="chain" id="PRO_1000072653" description="Ribosomal RNA small subunit methyltransferase A">
    <location>
        <begin position="1"/>
        <end position="297"/>
    </location>
</feature>
<feature type="binding site" evidence="1">
    <location>
        <position position="31"/>
    </location>
    <ligand>
        <name>S-adenosyl-L-methionine</name>
        <dbReference type="ChEBI" id="CHEBI:59789"/>
    </ligand>
</feature>
<feature type="binding site" evidence="1">
    <location>
        <position position="33"/>
    </location>
    <ligand>
        <name>S-adenosyl-L-methionine</name>
        <dbReference type="ChEBI" id="CHEBI:59789"/>
    </ligand>
</feature>
<feature type="binding site" evidence="1">
    <location>
        <position position="58"/>
    </location>
    <ligand>
        <name>S-adenosyl-L-methionine</name>
        <dbReference type="ChEBI" id="CHEBI:59789"/>
    </ligand>
</feature>
<feature type="binding site" evidence="1">
    <location>
        <position position="79"/>
    </location>
    <ligand>
        <name>S-adenosyl-L-methionine</name>
        <dbReference type="ChEBI" id="CHEBI:59789"/>
    </ligand>
</feature>
<feature type="binding site" evidence="1">
    <location>
        <position position="104"/>
    </location>
    <ligand>
        <name>S-adenosyl-L-methionine</name>
        <dbReference type="ChEBI" id="CHEBI:59789"/>
    </ligand>
</feature>
<feature type="binding site" evidence="1">
    <location>
        <position position="129"/>
    </location>
    <ligand>
        <name>S-adenosyl-L-methionine</name>
        <dbReference type="ChEBI" id="CHEBI:59789"/>
    </ligand>
</feature>
<proteinExistence type="inferred from homology"/>
<reference key="1">
    <citation type="journal article" date="2008" name="J. Bacteriol.">
        <title>Genome sequence of Staphylococcus aureus strain Newman and comparative analysis of staphylococcal genomes: polymorphism and evolution of two major pathogenicity islands.</title>
        <authorList>
            <person name="Baba T."/>
            <person name="Bae T."/>
            <person name="Schneewind O."/>
            <person name="Takeuchi F."/>
            <person name="Hiramatsu K."/>
        </authorList>
    </citation>
    <scope>NUCLEOTIDE SEQUENCE [LARGE SCALE GENOMIC DNA]</scope>
    <source>
        <strain>Newman</strain>
    </source>
</reference>
<protein>
    <recommendedName>
        <fullName evidence="1">Ribosomal RNA small subunit methyltransferase A</fullName>
        <ecNumber evidence="1">2.1.1.182</ecNumber>
    </recommendedName>
    <alternativeName>
        <fullName evidence="1">16S rRNA (adenine(1518)-N(6)/adenine(1519)-N(6))-dimethyltransferase</fullName>
    </alternativeName>
    <alternativeName>
        <fullName evidence="1">16S rRNA dimethyladenosine transferase</fullName>
    </alternativeName>
    <alternativeName>
        <fullName evidence="1">16S rRNA dimethylase</fullName>
    </alternativeName>
    <alternativeName>
        <fullName evidence="1">S-adenosylmethionine-6-N', N'-adenosyl(rRNA) dimethyltransferase</fullName>
    </alternativeName>
</protein>
<sequence>MLDNKDIATPSRTRALLDKYGFNFKKSLGQNFLIDVNIINNIIDASDIDAQTGVIEIGPGIGSLTEQLARHAKRVLAFEIDQRLIPVLNDTLSPYDNVTVINEDILKANIKEAVENHLQDCEKIMVVANLPYYITTPILLNLMQQDIPIDGYVVMMQKEVGERLNAEVGSKAYGSLSIVVQYYTETSKVLTVPKSVFMPPPNVDSIVVKLMQRTEPLVTVDNEEAFFKLAKAAFAQRRKTINNNYQNYFKDGKQHKEVILQWLEQAGIDPRRRGETLSIQDFAKLYEEKKKFPQLEN</sequence>
<name>RSMA_STAAE</name>
<evidence type="ECO:0000255" key="1">
    <source>
        <dbReference type="HAMAP-Rule" id="MF_00607"/>
    </source>
</evidence>
<organism>
    <name type="scientific">Staphylococcus aureus (strain Newman)</name>
    <dbReference type="NCBI Taxonomy" id="426430"/>
    <lineage>
        <taxon>Bacteria</taxon>
        <taxon>Bacillati</taxon>
        <taxon>Bacillota</taxon>
        <taxon>Bacilli</taxon>
        <taxon>Bacillales</taxon>
        <taxon>Staphylococcaceae</taxon>
        <taxon>Staphylococcus</taxon>
    </lineage>
</organism>
<gene>
    <name evidence="1" type="primary">rsmA</name>
    <name evidence="1" type="synonym">ksgA</name>
    <name type="ordered locus">NWMN_0456</name>
</gene>
<keyword id="KW-0963">Cytoplasm</keyword>
<keyword id="KW-0489">Methyltransferase</keyword>
<keyword id="KW-0694">RNA-binding</keyword>
<keyword id="KW-0698">rRNA processing</keyword>
<keyword id="KW-0949">S-adenosyl-L-methionine</keyword>
<keyword id="KW-0808">Transferase</keyword>
<dbReference type="EC" id="2.1.1.182" evidence="1"/>
<dbReference type="EMBL" id="AP009351">
    <property type="protein sequence ID" value="BAF66728.1"/>
    <property type="molecule type" value="Genomic_DNA"/>
</dbReference>
<dbReference type="RefSeq" id="WP_000886498.1">
    <property type="nucleotide sequence ID" value="NC_009641.1"/>
</dbReference>
<dbReference type="SMR" id="A6QEE6"/>
<dbReference type="KEGG" id="sae:NWMN_0456"/>
<dbReference type="HOGENOM" id="CLU_041220_0_0_9"/>
<dbReference type="Proteomes" id="UP000006386">
    <property type="component" value="Chromosome"/>
</dbReference>
<dbReference type="GO" id="GO:0005829">
    <property type="term" value="C:cytosol"/>
    <property type="evidence" value="ECO:0007669"/>
    <property type="project" value="TreeGrafter"/>
</dbReference>
<dbReference type="GO" id="GO:0052908">
    <property type="term" value="F:16S rRNA (adenine(1518)-N(6)/adenine(1519)-N(6))-dimethyltransferase activity"/>
    <property type="evidence" value="ECO:0007669"/>
    <property type="project" value="UniProtKB-EC"/>
</dbReference>
<dbReference type="GO" id="GO:0003723">
    <property type="term" value="F:RNA binding"/>
    <property type="evidence" value="ECO:0007669"/>
    <property type="project" value="UniProtKB-KW"/>
</dbReference>
<dbReference type="CDD" id="cd02440">
    <property type="entry name" value="AdoMet_MTases"/>
    <property type="match status" value="1"/>
</dbReference>
<dbReference type="FunFam" id="1.10.8.100:FF:000002">
    <property type="entry name" value="Ribosomal RNA small subunit methyltransferase A"/>
    <property type="match status" value="1"/>
</dbReference>
<dbReference type="FunFam" id="3.40.50.150:FF:000023">
    <property type="entry name" value="Ribosomal RNA small subunit methyltransferase A"/>
    <property type="match status" value="1"/>
</dbReference>
<dbReference type="Gene3D" id="1.10.8.100">
    <property type="entry name" value="Ribosomal RNA adenine dimethylase-like, domain 2"/>
    <property type="match status" value="1"/>
</dbReference>
<dbReference type="Gene3D" id="3.40.50.150">
    <property type="entry name" value="Vaccinia Virus protein VP39"/>
    <property type="match status" value="1"/>
</dbReference>
<dbReference type="HAMAP" id="MF_00607">
    <property type="entry name" value="16SrRNA_methyltr_A"/>
    <property type="match status" value="1"/>
</dbReference>
<dbReference type="InterPro" id="IPR001737">
    <property type="entry name" value="KsgA/Erm"/>
</dbReference>
<dbReference type="InterPro" id="IPR023165">
    <property type="entry name" value="rRNA_Ade_diMease-like_C"/>
</dbReference>
<dbReference type="InterPro" id="IPR020596">
    <property type="entry name" value="rRNA_Ade_Mease_Trfase_CS"/>
</dbReference>
<dbReference type="InterPro" id="IPR020598">
    <property type="entry name" value="rRNA_Ade_methylase_Trfase_N"/>
</dbReference>
<dbReference type="InterPro" id="IPR011530">
    <property type="entry name" value="rRNA_adenine_dimethylase"/>
</dbReference>
<dbReference type="InterPro" id="IPR029063">
    <property type="entry name" value="SAM-dependent_MTases_sf"/>
</dbReference>
<dbReference type="NCBIfam" id="TIGR00755">
    <property type="entry name" value="ksgA"/>
    <property type="match status" value="1"/>
</dbReference>
<dbReference type="PANTHER" id="PTHR11727">
    <property type="entry name" value="DIMETHYLADENOSINE TRANSFERASE"/>
    <property type="match status" value="1"/>
</dbReference>
<dbReference type="PANTHER" id="PTHR11727:SF7">
    <property type="entry name" value="DIMETHYLADENOSINE TRANSFERASE-RELATED"/>
    <property type="match status" value="1"/>
</dbReference>
<dbReference type="Pfam" id="PF00398">
    <property type="entry name" value="RrnaAD"/>
    <property type="match status" value="1"/>
</dbReference>
<dbReference type="SMART" id="SM00650">
    <property type="entry name" value="rADc"/>
    <property type="match status" value="1"/>
</dbReference>
<dbReference type="SUPFAM" id="SSF53335">
    <property type="entry name" value="S-adenosyl-L-methionine-dependent methyltransferases"/>
    <property type="match status" value="1"/>
</dbReference>
<dbReference type="PROSITE" id="PS01131">
    <property type="entry name" value="RRNA_A_DIMETH"/>
    <property type="match status" value="1"/>
</dbReference>
<dbReference type="PROSITE" id="PS51689">
    <property type="entry name" value="SAM_RNA_A_N6_MT"/>
    <property type="match status" value="1"/>
</dbReference>
<comment type="function">
    <text evidence="1">Specifically dimethylates two adjacent adenosines (A1518 and A1519) in the loop of a conserved hairpin near the 3'-end of 16S rRNA in the 30S particle. May play a critical role in biogenesis of 30S subunits.</text>
</comment>
<comment type="catalytic activity">
    <reaction evidence="1">
        <text>adenosine(1518)/adenosine(1519) in 16S rRNA + 4 S-adenosyl-L-methionine = N(6)-dimethyladenosine(1518)/N(6)-dimethyladenosine(1519) in 16S rRNA + 4 S-adenosyl-L-homocysteine + 4 H(+)</text>
        <dbReference type="Rhea" id="RHEA:19609"/>
        <dbReference type="Rhea" id="RHEA-COMP:10232"/>
        <dbReference type="Rhea" id="RHEA-COMP:10233"/>
        <dbReference type="ChEBI" id="CHEBI:15378"/>
        <dbReference type="ChEBI" id="CHEBI:57856"/>
        <dbReference type="ChEBI" id="CHEBI:59789"/>
        <dbReference type="ChEBI" id="CHEBI:74411"/>
        <dbReference type="ChEBI" id="CHEBI:74493"/>
        <dbReference type="EC" id="2.1.1.182"/>
    </reaction>
</comment>
<comment type="subcellular location">
    <subcellularLocation>
        <location evidence="1">Cytoplasm</location>
    </subcellularLocation>
</comment>
<comment type="similarity">
    <text evidence="1">Belongs to the class I-like SAM-binding methyltransferase superfamily. rRNA adenine N(6)-methyltransferase family. RsmA subfamily.</text>
</comment>